<name>NDK_METRJ</name>
<comment type="function">
    <text evidence="1">Major role in the synthesis of nucleoside triphosphates other than ATP. The ATP gamma phosphate is transferred to the NDP beta phosphate via a ping-pong mechanism, using a phosphorylated active-site intermediate.</text>
</comment>
<comment type="catalytic activity">
    <reaction evidence="1">
        <text>a 2'-deoxyribonucleoside 5'-diphosphate + ATP = a 2'-deoxyribonucleoside 5'-triphosphate + ADP</text>
        <dbReference type="Rhea" id="RHEA:44640"/>
        <dbReference type="ChEBI" id="CHEBI:30616"/>
        <dbReference type="ChEBI" id="CHEBI:61560"/>
        <dbReference type="ChEBI" id="CHEBI:73316"/>
        <dbReference type="ChEBI" id="CHEBI:456216"/>
        <dbReference type="EC" id="2.7.4.6"/>
    </reaction>
</comment>
<comment type="catalytic activity">
    <reaction evidence="1">
        <text>a ribonucleoside 5'-diphosphate + ATP = a ribonucleoside 5'-triphosphate + ADP</text>
        <dbReference type="Rhea" id="RHEA:18113"/>
        <dbReference type="ChEBI" id="CHEBI:30616"/>
        <dbReference type="ChEBI" id="CHEBI:57930"/>
        <dbReference type="ChEBI" id="CHEBI:61557"/>
        <dbReference type="ChEBI" id="CHEBI:456216"/>
        <dbReference type="EC" id="2.7.4.6"/>
    </reaction>
</comment>
<comment type="cofactor">
    <cofactor evidence="1">
        <name>Mg(2+)</name>
        <dbReference type="ChEBI" id="CHEBI:18420"/>
    </cofactor>
</comment>
<comment type="subunit">
    <text evidence="1">Homotetramer.</text>
</comment>
<comment type="subcellular location">
    <subcellularLocation>
        <location evidence="1">Cytoplasm</location>
    </subcellularLocation>
</comment>
<comment type="similarity">
    <text evidence="1">Belongs to the NDK family.</text>
</comment>
<sequence length="140" mass="15419">MATERTFSILKPDATRRNLTGAVNAVIEEAGLRIVGQRRIRMTKEQAEKFYEVHKERPFFGELVTFMTSGPVVVQVLEGENAVAKYREVMGATNPAQAAEGTIRKKFAESVGENTVHGSDSAENAKLEIAQFFKDSDIAA</sequence>
<protein>
    <recommendedName>
        <fullName evidence="1">Nucleoside diphosphate kinase</fullName>
        <shortName evidence="1">NDK</shortName>
        <shortName evidence="1">NDP kinase</shortName>
        <ecNumber evidence="1">2.7.4.6</ecNumber>
    </recommendedName>
    <alternativeName>
        <fullName evidence="1">Nucleoside-2-P kinase</fullName>
    </alternativeName>
</protein>
<feature type="chain" id="PRO_1000192271" description="Nucleoside diphosphate kinase">
    <location>
        <begin position="1"/>
        <end position="140"/>
    </location>
</feature>
<feature type="active site" description="Pros-phosphohistidine intermediate" evidence="1">
    <location>
        <position position="117"/>
    </location>
</feature>
<feature type="binding site" evidence="1">
    <location>
        <position position="11"/>
    </location>
    <ligand>
        <name>ATP</name>
        <dbReference type="ChEBI" id="CHEBI:30616"/>
    </ligand>
</feature>
<feature type="binding site" evidence="1">
    <location>
        <position position="59"/>
    </location>
    <ligand>
        <name>ATP</name>
        <dbReference type="ChEBI" id="CHEBI:30616"/>
    </ligand>
</feature>
<feature type="binding site" evidence="1">
    <location>
        <position position="87"/>
    </location>
    <ligand>
        <name>ATP</name>
        <dbReference type="ChEBI" id="CHEBI:30616"/>
    </ligand>
</feature>
<feature type="binding site" evidence="1">
    <location>
        <position position="93"/>
    </location>
    <ligand>
        <name>ATP</name>
        <dbReference type="ChEBI" id="CHEBI:30616"/>
    </ligand>
</feature>
<feature type="binding site" evidence="1">
    <location>
        <position position="104"/>
    </location>
    <ligand>
        <name>ATP</name>
        <dbReference type="ChEBI" id="CHEBI:30616"/>
    </ligand>
</feature>
<feature type="binding site" evidence="1">
    <location>
        <position position="114"/>
    </location>
    <ligand>
        <name>ATP</name>
        <dbReference type="ChEBI" id="CHEBI:30616"/>
    </ligand>
</feature>
<accession>B1LUB9</accession>
<proteinExistence type="inferred from homology"/>
<evidence type="ECO:0000255" key="1">
    <source>
        <dbReference type="HAMAP-Rule" id="MF_00451"/>
    </source>
</evidence>
<organism>
    <name type="scientific">Methylobacterium radiotolerans (strain ATCC 27329 / DSM 1819 / JCM 2831 / NBRC 15690 / NCIMB 10815 / 0-1)</name>
    <dbReference type="NCBI Taxonomy" id="426355"/>
    <lineage>
        <taxon>Bacteria</taxon>
        <taxon>Pseudomonadati</taxon>
        <taxon>Pseudomonadota</taxon>
        <taxon>Alphaproteobacteria</taxon>
        <taxon>Hyphomicrobiales</taxon>
        <taxon>Methylobacteriaceae</taxon>
        <taxon>Methylobacterium</taxon>
    </lineage>
</organism>
<keyword id="KW-0067">ATP-binding</keyword>
<keyword id="KW-0963">Cytoplasm</keyword>
<keyword id="KW-0418">Kinase</keyword>
<keyword id="KW-0460">Magnesium</keyword>
<keyword id="KW-0479">Metal-binding</keyword>
<keyword id="KW-0546">Nucleotide metabolism</keyword>
<keyword id="KW-0547">Nucleotide-binding</keyword>
<keyword id="KW-0597">Phosphoprotein</keyword>
<keyword id="KW-0808">Transferase</keyword>
<dbReference type="EC" id="2.7.4.6" evidence="1"/>
<dbReference type="EMBL" id="CP001001">
    <property type="protein sequence ID" value="ACB22499.1"/>
    <property type="molecule type" value="Genomic_DNA"/>
</dbReference>
<dbReference type="RefSeq" id="WP_012317495.1">
    <property type="nucleotide sequence ID" value="NC_010505.1"/>
</dbReference>
<dbReference type="SMR" id="B1LUB9"/>
<dbReference type="STRING" id="426355.Mrad2831_0488"/>
<dbReference type="GeneID" id="6136501"/>
<dbReference type="KEGG" id="mrd:Mrad2831_0488"/>
<dbReference type="eggNOG" id="COG0105">
    <property type="taxonomic scope" value="Bacteria"/>
</dbReference>
<dbReference type="HOGENOM" id="CLU_060216_8_1_5"/>
<dbReference type="OrthoDB" id="9801161at2"/>
<dbReference type="Proteomes" id="UP000006589">
    <property type="component" value="Chromosome"/>
</dbReference>
<dbReference type="GO" id="GO:0005737">
    <property type="term" value="C:cytoplasm"/>
    <property type="evidence" value="ECO:0007669"/>
    <property type="project" value="UniProtKB-SubCell"/>
</dbReference>
<dbReference type="GO" id="GO:0005524">
    <property type="term" value="F:ATP binding"/>
    <property type="evidence" value="ECO:0007669"/>
    <property type="project" value="UniProtKB-UniRule"/>
</dbReference>
<dbReference type="GO" id="GO:0046872">
    <property type="term" value="F:metal ion binding"/>
    <property type="evidence" value="ECO:0007669"/>
    <property type="project" value="UniProtKB-KW"/>
</dbReference>
<dbReference type="GO" id="GO:0004550">
    <property type="term" value="F:nucleoside diphosphate kinase activity"/>
    <property type="evidence" value="ECO:0007669"/>
    <property type="project" value="UniProtKB-UniRule"/>
</dbReference>
<dbReference type="GO" id="GO:0006241">
    <property type="term" value="P:CTP biosynthetic process"/>
    <property type="evidence" value="ECO:0007669"/>
    <property type="project" value="UniProtKB-UniRule"/>
</dbReference>
<dbReference type="GO" id="GO:0006183">
    <property type="term" value="P:GTP biosynthetic process"/>
    <property type="evidence" value="ECO:0007669"/>
    <property type="project" value="UniProtKB-UniRule"/>
</dbReference>
<dbReference type="GO" id="GO:0006228">
    <property type="term" value="P:UTP biosynthetic process"/>
    <property type="evidence" value="ECO:0007669"/>
    <property type="project" value="UniProtKB-UniRule"/>
</dbReference>
<dbReference type="CDD" id="cd04413">
    <property type="entry name" value="NDPk_I"/>
    <property type="match status" value="1"/>
</dbReference>
<dbReference type="FunFam" id="3.30.70.141:FF:000003">
    <property type="entry name" value="Nucleoside diphosphate kinase"/>
    <property type="match status" value="1"/>
</dbReference>
<dbReference type="Gene3D" id="3.30.70.141">
    <property type="entry name" value="Nucleoside diphosphate kinase-like domain"/>
    <property type="match status" value="1"/>
</dbReference>
<dbReference type="HAMAP" id="MF_00451">
    <property type="entry name" value="NDP_kinase"/>
    <property type="match status" value="1"/>
</dbReference>
<dbReference type="InterPro" id="IPR034907">
    <property type="entry name" value="NDK-like_dom"/>
</dbReference>
<dbReference type="InterPro" id="IPR036850">
    <property type="entry name" value="NDK-like_dom_sf"/>
</dbReference>
<dbReference type="InterPro" id="IPR001564">
    <property type="entry name" value="Nucleoside_diP_kinase"/>
</dbReference>
<dbReference type="NCBIfam" id="NF001908">
    <property type="entry name" value="PRK00668.1"/>
    <property type="match status" value="1"/>
</dbReference>
<dbReference type="PANTHER" id="PTHR46161">
    <property type="entry name" value="NUCLEOSIDE DIPHOSPHATE KINASE"/>
    <property type="match status" value="1"/>
</dbReference>
<dbReference type="PANTHER" id="PTHR46161:SF3">
    <property type="entry name" value="NUCLEOSIDE DIPHOSPHATE KINASE DDB_G0292928-RELATED"/>
    <property type="match status" value="1"/>
</dbReference>
<dbReference type="Pfam" id="PF00334">
    <property type="entry name" value="NDK"/>
    <property type="match status" value="1"/>
</dbReference>
<dbReference type="PRINTS" id="PR01243">
    <property type="entry name" value="NUCDPKINASE"/>
</dbReference>
<dbReference type="SMART" id="SM00562">
    <property type="entry name" value="NDK"/>
    <property type="match status" value="1"/>
</dbReference>
<dbReference type="SUPFAM" id="SSF54919">
    <property type="entry name" value="Nucleoside diphosphate kinase, NDK"/>
    <property type="match status" value="1"/>
</dbReference>
<dbReference type="PROSITE" id="PS51374">
    <property type="entry name" value="NDPK_LIKE"/>
    <property type="match status" value="1"/>
</dbReference>
<reference key="1">
    <citation type="submission" date="2008-03" db="EMBL/GenBank/DDBJ databases">
        <title>Complete sequence of chromosome of Methylobacterium radiotolerans JCM 2831.</title>
        <authorList>
            <consortium name="US DOE Joint Genome Institute"/>
            <person name="Copeland A."/>
            <person name="Lucas S."/>
            <person name="Lapidus A."/>
            <person name="Glavina del Rio T."/>
            <person name="Dalin E."/>
            <person name="Tice H."/>
            <person name="Bruce D."/>
            <person name="Goodwin L."/>
            <person name="Pitluck S."/>
            <person name="Kiss H."/>
            <person name="Brettin T."/>
            <person name="Detter J.C."/>
            <person name="Han C."/>
            <person name="Kuske C.R."/>
            <person name="Schmutz J."/>
            <person name="Larimer F."/>
            <person name="Land M."/>
            <person name="Hauser L."/>
            <person name="Kyrpides N."/>
            <person name="Mikhailova N."/>
            <person name="Marx C.J."/>
            <person name="Richardson P."/>
        </authorList>
    </citation>
    <scope>NUCLEOTIDE SEQUENCE [LARGE SCALE GENOMIC DNA]</scope>
    <source>
        <strain>ATCC 27329 / DSM 1819 / JCM 2831 / NBRC 15690 / NCIMB 10815 / 0-1</strain>
    </source>
</reference>
<gene>
    <name evidence="1" type="primary">ndk</name>
    <name type="ordered locus">Mrad2831_0488</name>
</gene>